<dbReference type="EMBL" id="AAHF01000003">
    <property type="protein sequence ID" value="EAL91431.1"/>
    <property type="molecule type" value="Genomic_DNA"/>
</dbReference>
<dbReference type="RefSeq" id="XP_753469.1">
    <property type="nucleotide sequence ID" value="XM_748376.1"/>
</dbReference>
<dbReference type="SMR" id="Q4WVE5"/>
<dbReference type="FunCoup" id="Q4WVE5">
    <property type="interactions" value="108"/>
</dbReference>
<dbReference type="STRING" id="330879.Q4WVE5"/>
<dbReference type="EnsemblFungi" id="EAL91431">
    <property type="protein sequence ID" value="EAL91431"/>
    <property type="gene ID" value="AFUA_5G11820"/>
</dbReference>
<dbReference type="GeneID" id="3511524"/>
<dbReference type="KEGG" id="afm:AFUA_5G11820"/>
<dbReference type="VEuPathDB" id="FungiDB:Afu5g11820"/>
<dbReference type="eggNOG" id="ENOG502QQY3">
    <property type="taxonomic scope" value="Eukaryota"/>
</dbReference>
<dbReference type="HOGENOM" id="CLU_030205_2_0_1"/>
<dbReference type="InParanoid" id="Q4WVE5"/>
<dbReference type="OMA" id="AFWPRCV"/>
<dbReference type="OrthoDB" id="2590239at2759"/>
<dbReference type="Proteomes" id="UP000002530">
    <property type="component" value="Chromosome 5"/>
</dbReference>
<dbReference type="GO" id="GO:0033106">
    <property type="term" value="C:cis-Golgi network membrane"/>
    <property type="evidence" value="ECO:0000250"/>
    <property type="project" value="UniProtKB"/>
</dbReference>
<dbReference type="GO" id="GO:0005737">
    <property type="term" value="C:cytoplasm"/>
    <property type="evidence" value="ECO:0000250"/>
    <property type="project" value="UniProtKB"/>
</dbReference>
<dbReference type="GO" id="GO:0005789">
    <property type="term" value="C:endoplasmic reticulum membrane"/>
    <property type="evidence" value="ECO:0007669"/>
    <property type="project" value="UniProtKB-SubCell"/>
</dbReference>
<dbReference type="GO" id="GO:0005634">
    <property type="term" value="C:nucleus"/>
    <property type="evidence" value="ECO:0007669"/>
    <property type="project" value="UniProtKB-SubCell"/>
</dbReference>
<dbReference type="GO" id="GO:0097001">
    <property type="term" value="F:ceramide binding"/>
    <property type="evidence" value="ECO:0000250"/>
    <property type="project" value="UniProtKB"/>
</dbReference>
<dbReference type="GO" id="GO:0035621">
    <property type="term" value="P:ER to Golgi ceramide transport"/>
    <property type="evidence" value="ECO:0000250"/>
    <property type="project" value="UniProtKB"/>
</dbReference>
<dbReference type="GO" id="GO:0006979">
    <property type="term" value="P:response to oxidative stress"/>
    <property type="evidence" value="ECO:0007669"/>
    <property type="project" value="InterPro"/>
</dbReference>
<dbReference type="FunFam" id="2.40.370.10:FF:000001">
    <property type="entry name" value="Survival factor 1"/>
    <property type="match status" value="1"/>
</dbReference>
<dbReference type="Gene3D" id="2.40.370.10">
    <property type="entry name" value="AttH-like domain"/>
    <property type="match status" value="1"/>
</dbReference>
<dbReference type="InterPro" id="IPR023374">
    <property type="entry name" value="AttH-like_dom_sf"/>
</dbReference>
<dbReference type="InterPro" id="IPR051385">
    <property type="entry name" value="Ceramide-binding_SVF1"/>
</dbReference>
<dbReference type="InterPro" id="IPR033394">
    <property type="entry name" value="Svf1-like_C"/>
</dbReference>
<dbReference type="InterPro" id="IPR013931">
    <property type="entry name" value="Svf1-like_N"/>
</dbReference>
<dbReference type="PANTHER" id="PTHR47107:SF1">
    <property type="entry name" value="CERAMIDE-BINDING PROTEIN SVF1-RELATED"/>
    <property type="match status" value="1"/>
</dbReference>
<dbReference type="PANTHER" id="PTHR47107">
    <property type="entry name" value="SVF1-LIKE PROTEIN YDR222W-RELATED"/>
    <property type="match status" value="1"/>
</dbReference>
<dbReference type="Pfam" id="PF08622">
    <property type="entry name" value="Svf1"/>
    <property type="match status" value="1"/>
</dbReference>
<dbReference type="Pfam" id="PF17187">
    <property type="entry name" value="Svf1_C"/>
    <property type="match status" value="1"/>
</dbReference>
<dbReference type="SUPFAM" id="SSF159245">
    <property type="entry name" value="AttH-like"/>
    <property type="match status" value="1"/>
</dbReference>
<organism>
    <name type="scientific">Aspergillus fumigatus (strain ATCC MYA-4609 / CBS 101355 / FGSC A1100 / Af293)</name>
    <name type="common">Neosartorya fumigata</name>
    <dbReference type="NCBI Taxonomy" id="330879"/>
    <lineage>
        <taxon>Eukaryota</taxon>
        <taxon>Fungi</taxon>
        <taxon>Dikarya</taxon>
        <taxon>Ascomycota</taxon>
        <taxon>Pezizomycotina</taxon>
        <taxon>Eurotiomycetes</taxon>
        <taxon>Eurotiomycetidae</taxon>
        <taxon>Eurotiales</taxon>
        <taxon>Aspergillaceae</taxon>
        <taxon>Aspergillus</taxon>
        <taxon>Aspergillus subgen. Fumigati</taxon>
    </lineage>
</organism>
<evidence type="ECO:0000250" key="1">
    <source>
        <dbReference type="UniProtKB" id="Q05515"/>
    </source>
</evidence>
<evidence type="ECO:0000305" key="2"/>
<keyword id="KW-0963">Cytoplasm</keyword>
<keyword id="KW-0256">Endoplasmic reticulum</keyword>
<keyword id="KW-0333">Golgi apparatus</keyword>
<keyword id="KW-0445">Lipid transport</keyword>
<keyword id="KW-0472">Membrane</keyword>
<keyword id="KW-0539">Nucleus</keyword>
<keyword id="KW-1185">Reference proteome</keyword>
<keyword id="KW-0813">Transport</keyword>
<gene>
    <name type="primary">svf1</name>
    <name type="ORF">AFUA_5G11820</name>
</gene>
<reference key="1">
    <citation type="journal article" date="2005" name="Nature">
        <title>Genomic sequence of the pathogenic and allergenic filamentous fungus Aspergillus fumigatus.</title>
        <authorList>
            <person name="Nierman W.C."/>
            <person name="Pain A."/>
            <person name="Anderson M.J."/>
            <person name="Wortman J.R."/>
            <person name="Kim H.S."/>
            <person name="Arroyo J."/>
            <person name="Berriman M."/>
            <person name="Abe K."/>
            <person name="Archer D.B."/>
            <person name="Bermejo C."/>
            <person name="Bennett J.W."/>
            <person name="Bowyer P."/>
            <person name="Chen D."/>
            <person name="Collins M."/>
            <person name="Coulsen R."/>
            <person name="Davies R."/>
            <person name="Dyer P.S."/>
            <person name="Farman M.L."/>
            <person name="Fedorova N."/>
            <person name="Fedorova N.D."/>
            <person name="Feldblyum T.V."/>
            <person name="Fischer R."/>
            <person name="Fosker N."/>
            <person name="Fraser A."/>
            <person name="Garcia J.L."/>
            <person name="Garcia M.J."/>
            <person name="Goble A."/>
            <person name="Goldman G.H."/>
            <person name="Gomi K."/>
            <person name="Griffith-Jones S."/>
            <person name="Gwilliam R."/>
            <person name="Haas B.J."/>
            <person name="Haas H."/>
            <person name="Harris D.E."/>
            <person name="Horiuchi H."/>
            <person name="Huang J."/>
            <person name="Humphray S."/>
            <person name="Jimenez J."/>
            <person name="Keller N."/>
            <person name="Khouri H."/>
            <person name="Kitamoto K."/>
            <person name="Kobayashi T."/>
            <person name="Konzack S."/>
            <person name="Kulkarni R."/>
            <person name="Kumagai T."/>
            <person name="Lafton A."/>
            <person name="Latge J.-P."/>
            <person name="Li W."/>
            <person name="Lord A."/>
            <person name="Lu C."/>
            <person name="Majoros W.H."/>
            <person name="May G.S."/>
            <person name="Miller B.L."/>
            <person name="Mohamoud Y."/>
            <person name="Molina M."/>
            <person name="Monod M."/>
            <person name="Mouyna I."/>
            <person name="Mulligan S."/>
            <person name="Murphy L.D."/>
            <person name="O'Neil S."/>
            <person name="Paulsen I."/>
            <person name="Penalva M.A."/>
            <person name="Pertea M."/>
            <person name="Price C."/>
            <person name="Pritchard B.L."/>
            <person name="Quail M.A."/>
            <person name="Rabbinowitsch E."/>
            <person name="Rawlins N."/>
            <person name="Rajandream M.A."/>
            <person name="Reichard U."/>
            <person name="Renauld H."/>
            <person name="Robson G.D."/>
            <person name="Rodriguez de Cordoba S."/>
            <person name="Rodriguez-Pena J.M."/>
            <person name="Ronning C.M."/>
            <person name="Rutter S."/>
            <person name="Salzberg S.L."/>
            <person name="Sanchez M."/>
            <person name="Sanchez-Ferrero J.C."/>
            <person name="Saunders D."/>
            <person name="Seeger K."/>
            <person name="Squares R."/>
            <person name="Squares S."/>
            <person name="Takeuchi M."/>
            <person name="Tekaia F."/>
            <person name="Turner G."/>
            <person name="Vazquez de Aldana C.R."/>
            <person name="Weidman J."/>
            <person name="White O."/>
            <person name="Woodward J.R."/>
            <person name="Yu J.-H."/>
            <person name="Fraser C.M."/>
            <person name="Galagan J.E."/>
            <person name="Asai K."/>
            <person name="Machida M."/>
            <person name="Hall N."/>
            <person name="Barrell B.G."/>
            <person name="Denning D.W."/>
        </authorList>
    </citation>
    <scope>NUCLEOTIDE SEQUENCE [LARGE SCALE GENOMIC DNA]</scope>
    <source>
        <strain>ATCC MYA-4609 / CBS 101355 / FGSC A1100 / Af293</strain>
    </source>
</reference>
<comment type="function">
    <text evidence="1">Ceramide-binding protein that may transfer ceramides from the endoplasmic reticulum membrane to the cis-Golgi network membrane, and is thereby required for the biosynthesis of complex sphingolipids.</text>
</comment>
<comment type="subcellular location">
    <subcellularLocation>
        <location evidence="1">Golgi apparatus</location>
        <location evidence="1">cis-Golgi network membrane</location>
        <topology evidence="1">Peripheral membrane protein</topology>
    </subcellularLocation>
    <subcellularLocation>
        <location evidence="1">Endoplasmic reticulum membrane</location>
        <topology evidence="1">Peripheral membrane protein</topology>
    </subcellularLocation>
    <subcellularLocation>
        <location evidence="1">Cytoplasm</location>
    </subcellularLocation>
    <subcellularLocation>
        <location evidence="1">Nucleus</location>
    </subcellularLocation>
    <text evidence="1">Localizes to the interface between the cis-Golgi network and endoplasmic reticulum exit sites.</text>
</comment>
<comment type="similarity">
    <text evidence="2">Belongs to the SVF1 family.</text>
</comment>
<protein>
    <recommendedName>
        <fullName evidence="2">Ceramide-binding protein svf1</fullName>
    </recommendedName>
    <alternativeName>
        <fullName>Survival factor 1</fullName>
    </alternativeName>
</protein>
<name>SVF1_ASPFU</name>
<proteinExistence type="inferred from homology"/>
<feature type="chain" id="PRO_0000072326" description="Ceramide-binding protein svf1">
    <location>
        <begin position="1"/>
        <end position="396"/>
    </location>
</feature>
<sequence>MNWLKSTLASVAGTQEPIYGPEAIQSVAQQAQQTPYTELTKDDLRWRAYQYTNVETETFYVMADNGTVVMVQVIYSNIAGIHTTAQFNSKIFNLKGDQPHIWHSDPLYNFMFDENMLSFGADNLALTLNEEGTAYTIKSAVNEDSLVNLTFTRTAPGFVVGKDGTSYFGTDPANPWGSMMHAFWPRCRVEGTITTKEKTYDLTGRGMFIHAIQGMKPHHAAARWNFINFQTPSYSAVMMEYTTPPSYGSTVVNVGGIVKDDEIIYAGATNSATHTASAHDADSDWPAPTSIKCVWDGKSKDGKDVHAELDGPLGNRLDRVDVMAEVPGFVKTIAGSVAGTRPYIFQVSLSLATGGSVVKLTIGQYSPQEKLSLKLKIGAEEFSEEGSMFSEATFIS</sequence>
<accession>Q4WVE5</accession>